<dbReference type="EC" id="2.4.2.9" evidence="1"/>
<dbReference type="EMBL" id="AM295007">
    <property type="protein sequence ID" value="CAM30852.1"/>
    <property type="molecule type" value="Genomic_DNA"/>
</dbReference>
<dbReference type="RefSeq" id="WP_002985854.1">
    <property type="nucleotide sequence ID" value="NC_009332.1"/>
</dbReference>
<dbReference type="SMR" id="A2RG73"/>
<dbReference type="GeneID" id="69901341"/>
<dbReference type="KEGG" id="spf:SpyM51531"/>
<dbReference type="HOGENOM" id="CLU_067096_2_2_9"/>
<dbReference type="UniPathway" id="UPA00574">
    <property type="reaction ID" value="UER00636"/>
</dbReference>
<dbReference type="GO" id="GO:0005525">
    <property type="term" value="F:GTP binding"/>
    <property type="evidence" value="ECO:0007669"/>
    <property type="project" value="UniProtKB-KW"/>
</dbReference>
<dbReference type="GO" id="GO:0000287">
    <property type="term" value="F:magnesium ion binding"/>
    <property type="evidence" value="ECO:0007669"/>
    <property type="project" value="UniProtKB-UniRule"/>
</dbReference>
<dbReference type="GO" id="GO:0004845">
    <property type="term" value="F:uracil phosphoribosyltransferase activity"/>
    <property type="evidence" value="ECO:0007669"/>
    <property type="project" value="UniProtKB-UniRule"/>
</dbReference>
<dbReference type="GO" id="GO:0044206">
    <property type="term" value="P:UMP salvage"/>
    <property type="evidence" value="ECO:0007669"/>
    <property type="project" value="UniProtKB-UniRule"/>
</dbReference>
<dbReference type="GO" id="GO:0006223">
    <property type="term" value="P:uracil salvage"/>
    <property type="evidence" value="ECO:0007669"/>
    <property type="project" value="InterPro"/>
</dbReference>
<dbReference type="CDD" id="cd06223">
    <property type="entry name" value="PRTases_typeI"/>
    <property type="match status" value="1"/>
</dbReference>
<dbReference type="FunFam" id="3.40.50.2020:FF:000003">
    <property type="entry name" value="Uracil phosphoribosyltransferase"/>
    <property type="match status" value="1"/>
</dbReference>
<dbReference type="Gene3D" id="3.40.50.2020">
    <property type="match status" value="1"/>
</dbReference>
<dbReference type="HAMAP" id="MF_01218_B">
    <property type="entry name" value="Upp_B"/>
    <property type="match status" value="1"/>
</dbReference>
<dbReference type="InterPro" id="IPR000836">
    <property type="entry name" value="PRibTrfase_dom"/>
</dbReference>
<dbReference type="InterPro" id="IPR029057">
    <property type="entry name" value="PRTase-like"/>
</dbReference>
<dbReference type="InterPro" id="IPR034332">
    <property type="entry name" value="Upp_B"/>
</dbReference>
<dbReference type="InterPro" id="IPR050054">
    <property type="entry name" value="UPRTase/APRTase"/>
</dbReference>
<dbReference type="InterPro" id="IPR005765">
    <property type="entry name" value="Ura_phspho_trans"/>
</dbReference>
<dbReference type="NCBIfam" id="NF001097">
    <property type="entry name" value="PRK00129.1"/>
    <property type="match status" value="1"/>
</dbReference>
<dbReference type="NCBIfam" id="TIGR01091">
    <property type="entry name" value="upp"/>
    <property type="match status" value="1"/>
</dbReference>
<dbReference type="PANTHER" id="PTHR32315">
    <property type="entry name" value="ADENINE PHOSPHORIBOSYLTRANSFERASE"/>
    <property type="match status" value="1"/>
</dbReference>
<dbReference type="PANTHER" id="PTHR32315:SF4">
    <property type="entry name" value="URACIL PHOSPHORIBOSYLTRANSFERASE, CHLOROPLASTIC"/>
    <property type="match status" value="1"/>
</dbReference>
<dbReference type="Pfam" id="PF14681">
    <property type="entry name" value="UPRTase"/>
    <property type="match status" value="1"/>
</dbReference>
<dbReference type="SUPFAM" id="SSF53271">
    <property type="entry name" value="PRTase-like"/>
    <property type="match status" value="1"/>
</dbReference>
<accession>A2RG73</accession>
<proteinExistence type="inferred from homology"/>
<feature type="chain" id="PRO_1000053798" description="Uracil phosphoribosyltransferase">
    <location>
        <begin position="1"/>
        <end position="209"/>
    </location>
</feature>
<feature type="binding site" evidence="1">
    <location>
        <position position="79"/>
    </location>
    <ligand>
        <name>5-phospho-alpha-D-ribose 1-diphosphate</name>
        <dbReference type="ChEBI" id="CHEBI:58017"/>
    </ligand>
</feature>
<feature type="binding site" evidence="1">
    <location>
        <position position="104"/>
    </location>
    <ligand>
        <name>5-phospho-alpha-D-ribose 1-diphosphate</name>
        <dbReference type="ChEBI" id="CHEBI:58017"/>
    </ligand>
</feature>
<feature type="binding site" evidence="1">
    <location>
        <begin position="131"/>
        <end position="139"/>
    </location>
    <ligand>
        <name>5-phospho-alpha-D-ribose 1-diphosphate</name>
        <dbReference type="ChEBI" id="CHEBI:58017"/>
    </ligand>
</feature>
<feature type="binding site" evidence="1">
    <location>
        <position position="194"/>
    </location>
    <ligand>
        <name>uracil</name>
        <dbReference type="ChEBI" id="CHEBI:17568"/>
    </ligand>
</feature>
<feature type="binding site" evidence="1">
    <location>
        <begin position="199"/>
        <end position="201"/>
    </location>
    <ligand>
        <name>uracil</name>
        <dbReference type="ChEBI" id="CHEBI:17568"/>
    </ligand>
</feature>
<feature type="binding site" evidence="1">
    <location>
        <position position="200"/>
    </location>
    <ligand>
        <name>5-phospho-alpha-D-ribose 1-diphosphate</name>
        <dbReference type="ChEBI" id="CHEBI:58017"/>
    </ligand>
</feature>
<organism>
    <name type="scientific">Streptococcus pyogenes serotype M5 (strain Manfredo)</name>
    <dbReference type="NCBI Taxonomy" id="160491"/>
    <lineage>
        <taxon>Bacteria</taxon>
        <taxon>Bacillati</taxon>
        <taxon>Bacillota</taxon>
        <taxon>Bacilli</taxon>
        <taxon>Lactobacillales</taxon>
        <taxon>Streptococcaceae</taxon>
        <taxon>Streptococcus</taxon>
    </lineage>
</organism>
<sequence length="209" mass="22826">MGKCQVISHPLIQHKLSILRRQTTSTKDFRELVNEIAMLMGYEVSRDLPLEDVDIQTPVSKTVQKQLAGKKLAIVPILRAGIGMVDGLLSLVPAAKVGHIGMYRNEETLEPVEYLVKLPEDINQRQIFLVDPMLATGGSAILAVDSLKKRGAANIKFVCLVAAPEGVKKLQEAHPDIDIFTAALDDHLNEHGYIVPGLGDAGDRLFGTK</sequence>
<gene>
    <name evidence="1" type="primary">upp</name>
    <name type="ordered locus">SpyM51531</name>
</gene>
<reference key="1">
    <citation type="journal article" date="2007" name="J. Bacteriol.">
        <title>Complete genome of acute rheumatic fever-associated serotype M5 Streptococcus pyogenes strain Manfredo.</title>
        <authorList>
            <person name="Holden M.T.G."/>
            <person name="Scott A."/>
            <person name="Cherevach I."/>
            <person name="Chillingworth T."/>
            <person name="Churcher C."/>
            <person name="Cronin A."/>
            <person name="Dowd L."/>
            <person name="Feltwell T."/>
            <person name="Hamlin N."/>
            <person name="Holroyd S."/>
            <person name="Jagels K."/>
            <person name="Moule S."/>
            <person name="Mungall K."/>
            <person name="Quail M.A."/>
            <person name="Price C."/>
            <person name="Rabbinowitsch E."/>
            <person name="Sharp S."/>
            <person name="Skelton J."/>
            <person name="Whitehead S."/>
            <person name="Barrell B.G."/>
            <person name="Kehoe M."/>
            <person name="Parkhill J."/>
        </authorList>
    </citation>
    <scope>NUCLEOTIDE SEQUENCE [LARGE SCALE GENOMIC DNA]</scope>
    <source>
        <strain>Manfredo</strain>
    </source>
</reference>
<keyword id="KW-0021">Allosteric enzyme</keyword>
<keyword id="KW-0328">Glycosyltransferase</keyword>
<keyword id="KW-0342">GTP-binding</keyword>
<keyword id="KW-0460">Magnesium</keyword>
<keyword id="KW-0547">Nucleotide-binding</keyword>
<keyword id="KW-0808">Transferase</keyword>
<comment type="function">
    <text evidence="1">Catalyzes the conversion of uracil and 5-phospho-alpha-D-ribose 1-diphosphate (PRPP) to UMP and diphosphate.</text>
</comment>
<comment type="catalytic activity">
    <reaction evidence="1">
        <text>UMP + diphosphate = 5-phospho-alpha-D-ribose 1-diphosphate + uracil</text>
        <dbReference type="Rhea" id="RHEA:13017"/>
        <dbReference type="ChEBI" id="CHEBI:17568"/>
        <dbReference type="ChEBI" id="CHEBI:33019"/>
        <dbReference type="ChEBI" id="CHEBI:57865"/>
        <dbReference type="ChEBI" id="CHEBI:58017"/>
        <dbReference type="EC" id="2.4.2.9"/>
    </reaction>
</comment>
<comment type="cofactor">
    <cofactor evidence="1">
        <name>Mg(2+)</name>
        <dbReference type="ChEBI" id="CHEBI:18420"/>
    </cofactor>
    <text evidence="1">Binds 1 Mg(2+) ion per subunit. The magnesium is bound as Mg-PRPP.</text>
</comment>
<comment type="activity regulation">
    <text evidence="1">Allosterically activated by GTP.</text>
</comment>
<comment type="pathway">
    <text evidence="1">Pyrimidine metabolism; UMP biosynthesis via salvage pathway; UMP from uracil: step 1/1.</text>
</comment>
<comment type="similarity">
    <text evidence="1">Belongs to the UPRTase family.</text>
</comment>
<name>UPP_STRPG</name>
<protein>
    <recommendedName>
        <fullName evidence="1">Uracil phosphoribosyltransferase</fullName>
        <ecNumber evidence="1">2.4.2.9</ecNumber>
    </recommendedName>
    <alternativeName>
        <fullName evidence="1">UMP pyrophosphorylase</fullName>
    </alternativeName>
    <alternativeName>
        <fullName evidence="1">UPRTase</fullName>
    </alternativeName>
</protein>
<evidence type="ECO:0000255" key="1">
    <source>
        <dbReference type="HAMAP-Rule" id="MF_01218"/>
    </source>
</evidence>